<keyword id="KW-0472">Membrane</keyword>
<keyword id="KW-0479">Metal-binding</keyword>
<keyword id="KW-0597">Phosphoprotein</keyword>
<keyword id="KW-1185">Reference proteome</keyword>
<keyword id="KW-0732">Signal</keyword>
<keyword id="KW-0808">Transferase</keyword>
<keyword id="KW-0812">Transmembrane</keyword>
<keyword id="KW-1133">Transmembrane helix</keyword>
<keyword id="KW-0833">Ubl conjugation pathway</keyword>
<keyword id="KW-0862">Zinc</keyword>
<keyword id="KW-0863">Zinc-finger</keyword>
<feature type="signal peptide" evidence="3">
    <location>
        <begin position="1"/>
        <end position="31"/>
    </location>
</feature>
<feature type="chain" id="PRO_0000030710" description="Putative RING-H2 finger protein ATL37">
    <location>
        <begin position="32"/>
        <end position="357"/>
    </location>
</feature>
<feature type="transmembrane region" description="Helical" evidence="3">
    <location>
        <begin position="47"/>
        <end position="67"/>
    </location>
</feature>
<feature type="zinc finger region" description="RING-type; atypical" evidence="4">
    <location>
        <begin position="120"/>
        <end position="162"/>
    </location>
</feature>
<feature type="region of interest" description="Disordered" evidence="5">
    <location>
        <begin position="172"/>
        <end position="210"/>
    </location>
</feature>
<feature type="region of interest" description="Disordered" evidence="5">
    <location>
        <begin position="281"/>
        <end position="304"/>
    </location>
</feature>
<feature type="region of interest" description="Disordered" evidence="5">
    <location>
        <begin position="327"/>
        <end position="357"/>
    </location>
</feature>
<feature type="compositionally biased region" description="Polar residues" evidence="5">
    <location>
        <begin position="198"/>
        <end position="210"/>
    </location>
</feature>
<feature type="compositionally biased region" description="Polar residues" evidence="5">
    <location>
        <begin position="283"/>
        <end position="304"/>
    </location>
</feature>
<feature type="compositionally biased region" description="Basic and acidic residues" evidence="5">
    <location>
        <begin position="340"/>
        <end position="357"/>
    </location>
</feature>
<feature type="modified residue" description="Phosphoserine" evidence="2">
    <location>
        <position position="273"/>
    </location>
</feature>
<proteinExistence type="inferred from homology"/>
<reference key="1">
    <citation type="journal article" date="1999" name="Nature">
        <title>Sequence and analysis of chromosome 4 of the plant Arabidopsis thaliana.</title>
        <authorList>
            <person name="Mayer K.F.X."/>
            <person name="Schueller C."/>
            <person name="Wambutt R."/>
            <person name="Murphy G."/>
            <person name="Volckaert G."/>
            <person name="Pohl T."/>
            <person name="Duesterhoeft A."/>
            <person name="Stiekema W."/>
            <person name="Entian K.-D."/>
            <person name="Terryn N."/>
            <person name="Harris B."/>
            <person name="Ansorge W."/>
            <person name="Brandt P."/>
            <person name="Grivell L.A."/>
            <person name="Rieger M."/>
            <person name="Weichselgartner M."/>
            <person name="de Simone V."/>
            <person name="Obermaier B."/>
            <person name="Mache R."/>
            <person name="Mueller M."/>
            <person name="Kreis M."/>
            <person name="Delseny M."/>
            <person name="Puigdomenech P."/>
            <person name="Watson M."/>
            <person name="Schmidtheini T."/>
            <person name="Reichert B."/>
            <person name="Portetelle D."/>
            <person name="Perez-Alonso M."/>
            <person name="Boutry M."/>
            <person name="Bancroft I."/>
            <person name="Vos P."/>
            <person name="Hoheisel J."/>
            <person name="Zimmermann W."/>
            <person name="Wedler H."/>
            <person name="Ridley P."/>
            <person name="Langham S.-A."/>
            <person name="McCullagh B."/>
            <person name="Bilham L."/>
            <person name="Robben J."/>
            <person name="van der Schueren J."/>
            <person name="Grymonprez B."/>
            <person name="Chuang Y.-J."/>
            <person name="Vandenbussche F."/>
            <person name="Braeken M."/>
            <person name="Weltjens I."/>
            <person name="Voet M."/>
            <person name="Bastiaens I."/>
            <person name="Aert R."/>
            <person name="Defoor E."/>
            <person name="Weitzenegger T."/>
            <person name="Bothe G."/>
            <person name="Ramsperger U."/>
            <person name="Hilbert H."/>
            <person name="Braun M."/>
            <person name="Holzer E."/>
            <person name="Brandt A."/>
            <person name="Peters S."/>
            <person name="van Staveren M."/>
            <person name="Dirkse W."/>
            <person name="Mooijman P."/>
            <person name="Klein Lankhorst R."/>
            <person name="Rose M."/>
            <person name="Hauf J."/>
            <person name="Koetter P."/>
            <person name="Berneiser S."/>
            <person name="Hempel S."/>
            <person name="Feldpausch M."/>
            <person name="Lamberth S."/>
            <person name="Van den Daele H."/>
            <person name="De Keyser A."/>
            <person name="Buysshaert C."/>
            <person name="Gielen J."/>
            <person name="Villarroel R."/>
            <person name="De Clercq R."/>
            <person name="van Montagu M."/>
            <person name="Rogers J."/>
            <person name="Cronin A."/>
            <person name="Quail M.A."/>
            <person name="Bray-Allen S."/>
            <person name="Clark L."/>
            <person name="Doggett J."/>
            <person name="Hall S."/>
            <person name="Kay M."/>
            <person name="Lennard N."/>
            <person name="McLay K."/>
            <person name="Mayes R."/>
            <person name="Pettett A."/>
            <person name="Rajandream M.A."/>
            <person name="Lyne M."/>
            <person name="Benes V."/>
            <person name="Rechmann S."/>
            <person name="Borkova D."/>
            <person name="Bloecker H."/>
            <person name="Scharfe M."/>
            <person name="Grimm M."/>
            <person name="Loehnert T.-H."/>
            <person name="Dose S."/>
            <person name="de Haan M."/>
            <person name="Maarse A.C."/>
            <person name="Schaefer M."/>
            <person name="Mueller-Auer S."/>
            <person name="Gabel C."/>
            <person name="Fuchs M."/>
            <person name="Fartmann B."/>
            <person name="Granderath K."/>
            <person name="Dauner D."/>
            <person name="Herzl A."/>
            <person name="Neumann S."/>
            <person name="Argiriou A."/>
            <person name="Vitale D."/>
            <person name="Liguori R."/>
            <person name="Piravandi E."/>
            <person name="Massenet O."/>
            <person name="Quigley F."/>
            <person name="Clabauld G."/>
            <person name="Muendlein A."/>
            <person name="Felber R."/>
            <person name="Schnabl S."/>
            <person name="Hiller R."/>
            <person name="Schmidt W."/>
            <person name="Lecharny A."/>
            <person name="Aubourg S."/>
            <person name="Chefdor F."/>
            <person name="Cooke R."/>
            <person name="Berger C."/>
            <person name="Monfort A."/>
            <person name="Casacuberta E."/>
            <person name="Gibbons T."/>
            <person name="Weber N."/>
            <person name="Vandenbol M."/>
            <person name="Bargues M."/>
            <person name="Terol J."/>
            <person name="Torres A."/>
            <person name="Perez-Perez A."/>
            <person name="Purnelle B."/>
            <person name="Bent E."/>
            <person name="Johnson S."/>
            <person name="Tacon D."/>
            <person name="Jesse T."/>
            <person name="Heijnen L."/>
            <person name="Schwarz S."/>
            <person name="Scholler P."/>
            <person name="Heber S."/>
            <person name="Francs P."/>
            <person name="Bielke C."/>
            <person name="Frishman D."/>
            <person name="Haase D."/>
            <person name="Lemcke K."/>
            <person name="Mewes H.-W."/>
            <person name="Stocker S."/>
            <person name="Zaccaria P."/>
            <person name="Bevan M."/>
            <person name="Wilson R.K."/>
            <person name="de la Bastide M."/>
            <person name="Habermann K."/>
            <person name="Parnell L."/>
            <person name="Dedhia N."/>
            <person name="Gnoj L."/>
            <person name="Schutz K."/>
            <person name="Huang E."/>
            <person name="Spiegel L."/>
            <person name="Sekhon M."/>
            <person name="Murray J."/>
            <person name="Sheet P."/>
            <person name="Cordes M."/>
            <person name="Abu-Threideh J."/>
            <person name="Stoneking T."/>
            <person name="Kalicki J."/>
            <person name="Graves T."/>
            <person name="Harmon G."/>
            <person name="Edwards J."/>
            <person name="Latreille P."/>
            <person name="Courtney L."/>
            <person name="Cloud J."/>
            <person name="Abbott A."/>
            <person name="Scott K."/>
            <person name="Johnson D."/>
            <person name="Minx P."/>
            <person name="Bentley D."/>
            <person name="Fulton B."/>
            <person name="Miller N."/>
            <person name="Greco T."/>
            <person name="Kemp K."/>
            <person name="Kramer J."/>
            <person name="Fulton L."/>
            <person name="Mardis E."/>
            <person name="Dante M."/>
            <person name="Pepin K."/>
            <person name="Hillier L.W."/>
            <person name="Nelson J."/>
            <person name="Spieth J."/>
            <person name="Ryan E."/>
            <person name="Andrews S."/>
            <person name="Geisel C."/>
            <person name="Layman D."/>
            <person name="Du H."/>
            <person name="Ali J."/>
            <person name="Berghoff A."/>
            <person name="Jones K."/>
            <person name="Drone K."/>
            <person name="Cotton M."/>
            <person name="Joshu C."/>
            <person name="Antonoiu B."/>
            <person name="Zidanic M."/>
            <person name="Strong C."/>
            <person name="Sun H."/>
            <person name="Lamar B."/>
            <person name="Yordan C."/>
            <person name="Ma P."/>
            <person name="Zhong J."/>
            <person name="Preston R."/>
            <person name="Vil D."/>
            <person name="Shekher M."/>
            <person name="Matero A."/>
            <person name="Shah R."/>
            <person name="Swaby I.K."/>
            <person name="O'Shaughnessy A."/>
            <person name="Rodriguez M."/>
            <person name="Hoffman J."/>
            <person name="Till S."/>
            <person name="Granat S."/>
            <person name="Shohdy N."/>
            <person name="Hasegawa A."/>
            <person name="Hameed A."/>
            <person name="Lodhi M."/>
            <person name="Johnson A."/>
            <person name="Chen E."/>
            <person name="Marra M.A."/>
            <person name="Martienssen R."/>
            <person name="McCombie W.R."/>
        </authorList>
    </citation>
    <scope>NUCLEOTIDE SEQUENCE [LARGE SCALE GENOMIC DNA]</scope>
    <source>
        <strain>cv. Columbia</strain>
    </source>
</reference>
<reference key="2">
    <citation type="journal article" date="2017" name="Plant J.">
        <title>Araport11: a complete reannotation of the Arabidopsis thaliana reference genome.</title>
        <authorList>
            <person name="Cheng C.Y."/>
            <person name="Krishnakumar V."/>
            <person name="Chan A.P."/>
            <person name="Thibaud-Nissen F."/>
            <person name="Schobel S."/>
            <person name="Town C.D."/>
        </authorList>
    </citation>
    <scope>GENOME REANNOTATION</scope>
    <source>
        <strain>cv. Columbia</strain>
    </source>
</reference>
<reference key="3">
    <citation type="journal article" date="2002" name="Genome Biol.">
        <title>Evaluation and classification of RING-finger domains encoded by the Arabidopsis genome.</title>
        <authorList>
            <person name="Kosarev P."/>
            <person name="Mayer K.F.X."/>
            <person name="Hardtke C.S."/>
        </authorList>
    </citation>
    <scope>GENE FAMILY ORGANIZATION</scope>
</reference>
<reference key="4">
    <citation type="journal article" date="2006" name="J. Mol. Evol.">
        <title>The ATL gene family from Arabidopsis thaliana and Oryza sativa comprises a large number of putative ubiquitin ligases of the RING-H2 type.</title>
        <authorList>
            <person name="Serrano M."/>
            <person name="Parra S."/>
            <person name="Alcaraz L.D."/>
            <person name="Guzman P."/>
        </authorList>
    </citation>
    <scope>NOMENCLATURE</scope>
    <scope>GENE FAMILY ORGANIZATION</scope>
</reference>
<protein>
    <recommendedName>
        <fullName>Putative RING-H2 finger protein ATL37</fullName>
        <ecNumber evidence="6">2.3.2.27</ecNumber>
    </recommendedName>
    <alternativeName>
        <fullName evidence="6">RING-type E3 ubiquitin transferase ATL37</fullName>
    </alternativeName>
</protein>
<comment type="catalytic activity">
    <reaction evidence="6">
        <text>S-ubiquitinyl-[E2 ubiquitin-conjugating enzyme]-L-cysteine + [acceptor protein]-L-lysine = [E2 ubiquitin-conjugating enzyme]-L-cysteine + N(6)-ubiquitinyl-[acceptor protein]-L-lysine.</text>
        <dbReference type="EC" id="2.3.2.27"/>
    </reaction>
</comment>
<comment type="pathway">
    <text>Protein modification; protein ubiquitination.</text>
</comment>
<comment type="subcellular location">
    <subcellularLocation>
        <location evidence="6">Membrane</location>
        <topology evidence="6">Single-pass membrane protein</topology>
    </subcellularLocation>
</comment>
<comment type="domain">
    <text evidence="1">The RING-type zinc finger domain mediates binding to an E2 ubiquitin-conjugating enzyme.</text>
</comment>
<comment type="similarity">
    <text evidence="6">Belongs to the RING-type zinc finger family. ATL subfamily.</text>
</comment>
<gene>
    <name type="primary">ATL37</name>
    <name type="ordered locus">At4g09130</name>
    <name type="ORF">F23J3.160</name>
    <name type="ORF">T8A17.9</name>
</gene>
<dbReference type="EC" id="2.3.2.27" evidence="6"/>
<dbReference type="EMBL" id="AC005359">
    <property type="status" value="NOT_ANNOTATED_CDS"/>
    <property type="molecule type" value="Genomic_DNA"/>
</dbReference>
<dbReference type="EMBL" id="AL161514">
    <property type="protein sequence ID" value="CAB78037.1"/>
    <property type="molecule type" value="Genomic_DNA"/>
</dbReference>
<dbReference type="EMBL" id="CP002687">
    <property type="protein sequence ID" value="AEE82725.1"/>
    <property type="molecule type" value="Genomic_DNA"/>
</dbReference>
<dbReference type="PIR" id="E85092">
    <property type="entry name" value="E85092"/>
</dbReference>
<dbReference type="RefSeq" id="NP_192652.1">
    <property type="nucleotide sequence ID" value="NM_116982.3"/>
</dbReference>
<dbReference type="SMR" id="Q9M0R4"/>
<dbReference type="PaxDb" id="3702-AT4G09130.1"/>
<dbReference type="EnsemblPlants" id="AT4G09130.1">
    <property type="protein sequence ID" value="AT4G09130.1"/>
    <property type="gene ID" value="AT4G09130"/>
</dbReference>
<dbReference type="GeneID" id="826491"/>
<dbReference type="Gramene" id="AT4G09130.1">
    <property type="protein sequence ID" value="AT4G09130.1"/>
    <property type="gene ID" value="AT4G09130"/>
</dbReference>
<dbReference type="KEGG" id="ath:AT4G09130"/>
<dbReference type="Araport" id="AT4G09130"/>
<dbReference type="TAIR" id="AT4G09130">
    <property type="gene designation" value="ATL37"/>
</dbReference>
<dbReference type="eggNOG" id="KOG0800">
    <property type="taxonomic scope" value="Eukaryota"/>
</dbReference>
<dbReference type="HOGENOM" id="CLU_035191_1_0_1"/>
<dbReference type="InParanoid" id="Q9M0R4"/>
<dbReference type="OMA" id="NVQRGVQ"/>
<dbReference type="PhylomeDB" id="Q9M0R4"/>
<dbReference type="UniPathway" id="UPA00143"/>
<dbReference type="PRO" id="PR:Q9M0R4"/>
<dbReference type="Proteomes" id="UP000006548">
    <property type="component" value="Chromosome 4"/>
</dbReference>
<dbReference type="ExpressionAtlas" id="Q9M0R4">
    <property type="expression patterns" value="baseline and differential"/>
</dbReference>
<dbReference type="GO" id="GO:0016020">
    <property type="term" value="C:membrane"/>
    <property type="evidence" value="ECO:0007669"/>
    <property type="project" value="UniProtKB-SubCell"/>
</dbReference>
<dbReference type="GO" id="GO:0016740">
    <property type="term" value="F:transferase activity"/>
    <property type="evidence" value="ECO:0007669"/>
    <property type="project" value="UniProtKB-KW"/>
</dbReference>
<dbReference type="GO" id="GO:0008270">
    <property type="term" value="F:zinc ion binding"/>
    <property type="evidence" value="ECO:0007669"/>
    <property type="project" value="UniProtKB-KW"/>
</dbReference>
<dbReference type="GO" id="GO:0016567">
    <property type="term" value="P:protein ubiquitination"/>
    <property type="evidence" value="ECO:0007669"/>
    <property type="project" value="UniProtKB-UniPathway"/>
</dbReference>
<dbReference type="CDD" id="cd16461">
    <property type="entry name" value="RING-H2_EL5-like"/>
    <property type="match status" value="1"/>
</dbReference>
<dbReference type="FunFam" id="3.30.40.10:FF:000187">
    <property type="entry name" value="E3 ubiquitin-protein ligase ATL6"/>
    <property type="match status" value="1"/>
</dbReference>
<dbReference type="Gene3D" id="3.30.40.10">
    <property type="entry name" value="Zinc/RING finger domain, C3HC4 (zinc finger)"/>
    <property type="match status" value="1"/>
</dbReference>
<dbReference type="InterPro" id="IPR053238">
    <property type="entry name" value="RING-H2_zinc_finger"/>
</dbReference>
<dbReference type="InterPro" id="IPR001841">
    <property type="entry name" value="Znf_RING"/>
</dbReference>
<dbReference type="InterPro" id="IPR013083">
    <property type="entry name" value="Znf_RING/FYVE/PHD"/>
</dbReference>
<dbReference type="PANTHER" id="PTHR14155">
    <property type="entry name" value="RING FINGER DOMAIN-CONTAINING"/>
    <property type="match status" value="1"/>
</dbReference>
<dbReference type="PANTHER" id="PTHR14155:SF547">
    <property type="entry name" value="RING-H2 FINGER PROTEIN ATL35-RELATED"/>
    <property type="match status" value="1"/>
</dbReference>
<dbReference type="Pfam" id="PF13639">
    <property type="entry name" value="zf-RING_2"/>
    <property type="match status" value="1"/>
</dbReference>
<dbReference type="SMART" id="SM01197">
    <property type="entry name" value="FANCL_C"/>
    <property type="match status" value="1"/>
</dbReference>
<dbReference type="SMART" id="SM00184">
    <property type="entry name" value="RING"/>
    <property type="match status" value="1"/>
</dbReference>
<dbReference type="SUPFAM" id="SSF57850">
    <property type="entry name" value="RING/U-box"/>
    <property type="match status" value="1"/>
</dbReference>
<dbReference type="PROSITE" id="PS50089">
    <property type="entry name" value="ZF_RING_2"/>
    <property type="match status" value="1"/>
</dbReference>
<accession>Q9M0R4</accession>
<name>ATL37_ARATH</name>
<evidence type="ECO:0000250" key="1"/>
<evidence type="ECO:0000250" key="2">
    <source>
        <dbReference type="UniProtKB" id="Q8RXX9"/>
    </source>
</evidence>
<evidence type="ECO:0000255" key="3"/>
<evidence type="ECO:0000255" key="4">
    <source>
        <dbReference type="PROSITE-ProRule" id="PRU00175"/>
    </source>
</evidence>
<evidence type="ECO:0000256" key="5">
    <source>
        <dbReference type="SAM" id="MobiDB-lite"/>
    </source>
</evidence>
<evidence type="ECO:0000305" key="6"/>
<sequence>MTIFTRDFSHRILACVLLPLFLFQCLPYVTCQQGSESAGRNGKSKESSIIGIVLLSLFLLLLVVYCLNYGCCIEENETGGHEVLHSRVRRGIDKDVIESFPAFLYSEVKAFKIGNGGVECAICLCEFEDEEPLRWMPPCSHTFHANCIDEWLSSRSTCPVCRANLSLKSGDSFPHPSMDVETGNAQRGVQESPDERSLTGSSVTCNNNANYTTPRSRSTGLLSSWHVPELFLPRSHSTGHSLVQPCQNIDRFTLQLPEEVQRQLVSLNLIKRSHIALPRARSSRQGYRSGSVGNERTGFSQGRQTLRRAISTSLSFSFQPAPVRSTLDRDNLMRETSQANDKDFGERSFQRLMPEKN</sequence>
<organism>
    <name type="scientific">Arabidopsis thaliana</name>
    <name type="common">Mouse-ear cress</name>
    <dbReference type="NCBI Taxonomy" id="3702"/>
    <lineage>
        <taxon>Eukaryota</taxon>
        <taxon>Viridiplantae</taxon>
        <taxon>Streptophyta</taxon>
        <taxon>Embryophyta</taxon>
        <taxon>Tracheophyta</taxon>
        <taxon>Spermatophyta</taxon>
        <taxon>Magnoliopsida</taxon>
        <taxon>eudicotyledons</taxon>
        <taxon>Gunneridae</taxon>
        <taxon>Pentapetalae</taxon>
        <taxon>rosids</taxon>
        <taxon>malvids</taxon>
        <taxon>Brassicales</taxon>
        <taxon>Brassicaceae</taxon>
        <taxon>Camelineae</taxon>
        <taxon>Arabidopsis</taxon>
    </lineage>
</organism>